<accession>O05331</accession>
<evidence type="ECO:0000255" key="1">
    <source>
        <dbReference type="HAMAP-Rule" id="MF_01396"/>
    </source>
</evidence>
<evidence type="ECO:0000269" key="2">
    <source ref="2"/>
</evidence>
<gene>
    <name evidence="1" type="primary">atpE</name>
</gene>
<organism>
    <name type="scientific">Rhodobacter capsulatus</name>
    <name type="common">Rhodopseudomonas capsulata</name>
    <dbReference type="NCBI Taxonomy" id="1061"/>
    <lineage>
        <taxon>Bacteria</taxon>
        <taxon>Pseudomonadati</taxon>
        <taxon>Pseudomonadota</taxon>
        <taxon>Alphaproteobacteria</taxon>
        <taxon>Rhodobacterales</taxon>
        <taxon>Rhodobacter group</taxon>
        <taxon>Rhodobacter</taxon>
    </lineage>
</organism>
<comment type="function">
    <text evidence="1">F(1)F(0) ATP synthase produces ATP from ADP in the presence of a proton or sodium gradient. F-type ATPases consist of two structural domains, F(1) containing the extramembraneous catalytic core and F(0) containing the membrane proton channel, linked together by a central stalk and a peripheral stalk. During catalysis, ATP synthesis in the catalytic domain of F(1) is coupled via a rotary mechanism of the central stalk subunits to proton translocation.</text>
</comment>
<comment type="function">
    <text evidence="1">Key component of the F(0) channel; it plays a direct role in translocation across the membrane. A homomeric c-ring of between 10-14 subunits forms the central stalk rotor element with the F(1) delta and epsilon subunits.</text>
</comment>
<comment type="subunit">
    <text evidence="1 2">F-type ATPases have 2 components, F(1) - the catalytic core - and F(0) - the membrane proton channel. F(1) has five subunits: alpha(3), beta(3), gamma(1), delta(1), epsilon(1). F(0) has four main subunits: a(1), b(1), b'(1) and c(10-14). The alpha and beta chains form an alternating ring which encloses part of the gamma chain. F(1) is attached to F(0) by a central stalk formed by the gamma and epsilon chains, while a peripheral stalk is formed by the delta, b and b' chains.</text>
</comment>
<comment type="subcellular location">
    <subcellularLocation>
        <location evidence="2">Cellular chromatophore membrane</location>
        <topology evidence="1 2">Multi-pass membrane protein</topology>
    </subcellularLocation>
</comment>
<comment type="similarity">
    <text evidence="1">Belongs to the ATPase C chain family.</text>
</comment>
<reference key="1">
    <citation type="journal article" date="1998" name="Arch. Microbiol.">
        <title>The atpIBEXF operon coding for the Fo sector of the ATP synthase from the purple nonsulfur photosynthetic bacterium Rhodobacter capsulatus.</title>
        <authorList>
            <person name="Borghese R."/>
            <person name="Turina P."/>
            <person name="Lambertini L."/>
            <person name="Melandri B.A."/>
        </authorList>
    </citation>
    <scope>NUCLEOTIDE SEQUENCE [GENOMIC DNA]</scope>
    <source>
        <strain>ATCC 33303 / B10</strain>
    </source>
</reference>
<reference key="2">
    <citation type="journal article" date="1988" name="Biochim. Biophys. Acta">
        <title>Purification of the H+-ATPase from Rhodobacter capsulatus, identification of the F1F0 components and reconstitution of the active enzyme.</title>
        <authorList>
            <person name="Gabellini N."/>
            <person name="Gao Z."/>
            <person name="Eckerskorn C."/>
            <person name="Lottspeich F."/>
            <person name="Oesterhelt D."/>
        </authorList>
    </citation>
    <scope>SUBUNIT</scope>
    <scope>SUBCELLULAR LOCATION</scope>
    <source>
        <strain>GA</strain>
    </source>
</reference>
<dbReference type="EMBL" id="Y12313">
    <property type="protein sequence ID" value="CAA72982.1"/>
    <property type="molecule type" value="Genomic_DNA"/>
</dbReference>
<dbReference type="RefSeq" id="WP_013066486.1">
    <property type="nucleotide sequence ID" value="NZ_CP061202.1"/>
</dbReference>
<dbReference type="SMR" id="O05331"/>
<dbReference type="GeneID" id="31489686"/>
<dbReference type="OMA" id="YIFGKMI"/>
<dbReference type="OrthoDB" id="9811093at2"/>
<dbReference type="GO" id="GO:0005886">
    <property type="term" value="C:plasma membrane"/>
    <property type="evidence" value="ECO:0007669"/>
    <property type="project" value="UniProtKB-UniRule"/>
</dbReference>
<dbReference type="GO" id="GO:0042717">
    <property type="term" value="C:plasma membrane-derived chromatophore membrane"/>
    <property type="evidence" value="ECO:0007669"/>
    <property type="project" value="UniProtKB-SubCell"/>
</dbReference>
<dbReference type="GO" id="GO:0045259">
    <property type="term" value="C:proton-transporting ATP synthase complex"/>
    <property type="evidence" value="ECO:0007669"/>
    <property type="project" value="UniProtKB-KW"/>
</dbReference>
<dbReference type="GO" id="GO:0033177">
    <property type="term" value="C:proton-transporting two-sector ATPase complex, proton-transporting domain"/>
    <property type="evidence" value="ECO:0007669"/>
    <property type="project" value="InterPro"/>
</dbReference>
<dbReference type="GO" id="GO:0008289">
    <property type="term" value="F:lipid binding"/>
    <property type="evidence" value="ECO:0007669"/>
    <property type="project" value="UniProtKB-KW"/>
</dbReference>
<dbReference type="GO" id="GO:0046933">
    <property type="term" value="F:proton-transporting ATP synthase activity, rotational mechanism"/>
    <property type="evidence" value="ECO:0007669"/>
    <property type="project" value="UniProtKB-UniRule"/>
</dbReference>
<dbReference type="Gene3D" id="1.20.20.10">
    <property type="entry name" value="F1F0 ATP synthase subunit C"/>
    <property type="match status" value="1"/>
</dbReference>
<dbReference type="HAMAP" id="MF_01396">
    <property type="entry name" value="ATP_synth_c_bact"/>
    <property type="match status" value="1"/>
</dbReference>
<dbReference type="InterPro" id="IPR005953">
    <property type="entry name" value="ATP_synth_csu_bac/chlpt"/>
</dbReference>
<dbReference type="InterPro" id="IPR000454">
    <property type="entry name" value="ATP_synth_F0_csu"/>
</dbReference>
<dbReference type="InterPro" id="IPR038662">
    <property type="entry name" value="ATP_synth_F0_csu_sf"/>
</dbReference>
<dbReference type="InterPro" id="IPR002379">
    <property type="entry name" value="ATPase_proteolipid_c-like_dom"/>
</dbReference>
<dbReference type="InterPro" id="IPR035921">
    <property type="entry name" value="F/V-ATP_Csub_sf"/>
</dbReference>
<dbReference type="NCBIfam" id="TIGR01260">
    <property type="entry name" value="ATP_synt_c"/>
    <property type="match status" value="1"/>
</dbReference>
<dbReference type="NCBIfam" id="NF005733">
    <property type="entry name" value="PRK07558.1"/>
    <property type="match status" value="1"/>
</dbReference>
<dbReference type="PANTHER" id="PTHR10031">
    <property type="entry name" value="ATP SYNTHASE LIPID-BINDING PROTEIN, MITOCHONDRIAL"/>
    <property type="match status" value="1"/>
</dbReference>
<dbReference type="PANTHER" id="PTHR10031:SF0">
    <property type="entry name" value="ATPASE PROTEIN 9"/>
    <property type="match status" value="1"/>
</dbReference>
<dbReference type="Pfam" id="PF00137">
    <property type="entry name" value="ATP-synt_C"/>
    <property type="match status" value="1"/>
</dbReference>
<dbReference type="PRINTS" id="PR00124">
    <property type="entry name" value="ATPASEC"/>
</dbReference>
<dbReference type="SUPFAM" id="SSF81333">
    <property type="entry name" value="F1F0 ATP synthase subunit C"/>
    <property type="match status" value="1"/>
</dbReference>
<protein>
    <recommendedName>
        <fullName evidence="1">ATP synthase subunit c</fullName>
    </recommendedName>
    <alternativeName>
        <fullName evidence="1">ATP synthase F(0) sector subunit c</fullName>
    </alternativeName>
    <alternativeName>
        <fullName evidence="1">F-type ATPase subunit c</fullName>
        <shortName evidence="1">F-ATPase subunit c</shortName>
    </alternativeName>
    <alternativeName>
        <fullName evidence="1">Lipid-binding protein</fullName>
    </alternativeName>
</protein>
<feature type="chain" id="PRO_0000239039" description="ATP synthase subunit c">
    <location>
        <begin position="1"/>
        <end position="78"/>
    </location>
</feature>
<feature type="transmembrane region" description="Helical" evidence="1">
    <location>
        <begin position="12"/>
        <end position="32"/>
    </location>
</feature>
<feature type="transmembrane region" description="Helical" evidence="1">
    <location>
        <begin position="54"/>
        <end position="74"/>
    </location>
</feature>
<feature type="site" description="Reversibly protonated during proton transport" evidence="1">
    <location>
        <position position="61"/>
    </location>
</feature>
<keyword id="KW-0066">ATP synthesis</keyword>
<keyword id="KW-0138">CF(0)</keyword>
<keyword id="KW-0375">Hydrogen ion transport</keyword>
<keyword id="KW-0406">Ion transport</keyword>
<keyword id="KW-0446">Lipid-binding</keyword>
<keyword id="KW-0472">Membrane</keyword>
<keyword id="KW-0812">Transmembrane</keyword>
<keyword id="KW-1133">Transmembrane helix</keyword>
<keyword id="KW-0813">Transport</keyword>
<proteinExistence type="evidence at protein level"/>
<name>ATPL_RHOCA</name>
<sequence>MEGDIVQMGAYIGAGLACTGMGGAAVGVGHVVGNFISGALRNPSAAASQTATMFIGIAFAEALGIFSFLVALLLMFAV</sequence>